<name>CH10_MYCGE</name>
<evidence type="ECO:0000255" key="1">
    <source>
        <dbReference type="HAMAP-Rule" id="MF_00580"/>
    </source>
</evidence>
<evidence type="ECO:0000305" key="2"/>
<feature type="chain" id="PRO_0000174789" description="Co-chaperonin GroES">
    <location>
        <begin position="1"/>
        <end position="110"/>
    </location>
</feature>
<protein>
    <recommendedName>
        <fullName evidence="1">Co-chaperonin GroES</fullName>
    </recommendedName>
    <alternativeName>
        <fullName evidence="1">10 kDa chaperonin</fullName>
    </alternativeName>
    <alternativeName>
        <fullName evidence="1">Chaperonin-10</fullName>
        <shortName evidence="1">Cpn10</shortName>
    </alternativeName>
</protein>
<accession>P47633</accession>
<organism>
    <name type="scientific">Mycoplasma genitalium (strain ATCC 33530 / DSM 19775 / NCTC 10195 / G37)</name>
    <name type="common">Mycoplasmoides genitalium</name>
    <dbReference type="NCBI Taxonomy" id="243273"/>
    <lineage>
        <taxon>Bacteria</taxon>
        <taxon>Bacillati</taxon>
        <taxon>Mycoplasmatota</taxon>
        <taxon>Mycoplasmoidales</taxon>
        <taxon>Mycoplasmoidaceae</taxon>
        <taxon>Mycoplasmoides</taxon>
    </lineage>
</organism>
<keyword id="KW-0143">Chaperone</keyword>
<keyword id="KW-0963">Cytoplasm</keyword>
<keyword id="KW-1185">Reference proteome</keyword>
<proteinExistence type="inferred from homology"/>
<reference key="1">
    <citation type="journal article" date="1995" name="Science">
        <title>The minimal gene complement of Mycoplasma genitalium.</title>
        <authorList>
            <person name="Fraser C.M."/>
            <person name="Gocayne J.D."/>
            <person name="White O."/>
            <person name="Adams M.D."/>
            <person name="Clayton R.A."/>
            <person name="Fleischmann R.D."/>
            <person name="Bult C.J."/>
            <person name="Kerlavage A.R."/>
            <person name="Sutton G.G."/>
            <person name="Kelley J.M."/>
            <person name="Fritchman J.L."/>
            <person name="Weidman J.F."/>
            <person name="Small K.V."/>
            <person name="Sandusky M."/>
            <person name="Fuhrmann J.L."/>
            <person name="Nguyen D.T."/>
            <person name="Utterback T.R."/>
            <person name="Saudek D.M."/>
            <person name="Phillips C.A."/>
            <person name="Merrick J.M."/>
            <person name="Tomb J.-F."/>
            <person name="Dougherty B.A."/>
            <person name="Bott K.F."/>
            <person name="Hu P.-C."/>
            <person name="Lucier T.S."/>
            <person name="Peterson S.N."/>
            <person name="Smith H.O."/>
            <person name="Hutchison C.A. III"/>
            <person name="Venter J.C."/>
        </authorList>
    </citation>
    <scope>NUCLEOTIDE SEQUENCE [LARGE SCALE GENOMIC DNA]</scope>
    <source>
        <strain>ATCC 33530 / DSM 19775 / NCTC 10195 / G37</strain>
    </source>
</reference>
<reference key="2">
    <citation type="journal article" date="1993" name="J. Bacteriol.">
        <title>A survey of the Mycoplasma genitalium genome by using random sequencing.</title>
        <authorList>
            <person name="Peterson S.N."/>
            <person name="Hu P.-C."/>
            <person name="Bott K.F."/>
            <person name="Hutchison C.A. III"/>
        </authorList>
    </citation>
    <scope>NUCLEOTIDE SEQUENCE [GENOMIC DNA] OF 78-110</scope>
    <source>
        <strain>ATCC 33530 / DSM 19775 / NCTC 10195 / G37</strain>
    </source>
</reference>
<sequence length="110" mass="12029">MNITPIHDNVLVSLVESNKEEVSKKGIITSLASNDKSDANANKGIVIALGAGPAYGKTEKPKYAFGVGDIIYFKEYSGISFENEGNKYKIIGFEDVLAFEKPESGKQRKR</sequence>
<dbReference type="EMBL" id="L43967">
    <property type="protein sequence ID" value="AAC71621.1"/>
    <property type="molecule type" value="Genomic_DNA"/>
</dbReference>
<dbReference type="EMBL" id="U02252">
    <property type="protein sequence ID" value="AAD12516.1"/>
    <property type="molecule type" value="Genomic_DNA"/>
</dbReference>
<dbReference type="PIR" id="E64243">
    <property type="entry name" value="E64243"/>
</dbReference>
<dbReference type="RefSeq" id="WP_010869464.1">
    <property type="nucleotide sequence ID" value="NC_000908.2"/>
</dbReference>
<dbReference type="SMR" id="P47633"/>
<dbReference type="FunCoup" id="P47633">
    <property type="interactions" value="179"/>
</dbReference>
<dbReference type="STRING" id="243273.MG_393"/>
<dbReference type="GeneID" id="88282578"/>
<dbReference type="KEGG" id="mge:MG_393"/>
<dbReference type="eggNOG" id="COG0234">
    <property type="taxonomic scope" value="Bacteria"/>
</dbReference>
<dbReference type="HOGENOM" id="CLU_132825_2_2_14"/>
<dbReference type="InParanoid" id="P47633"/>
<dbReference type="OrthoDB" id="9806791at2"/>
<dbReference type="BioCyc" id="MGEN243273:G1GJ2-489-MONOMER"/>
<dbReference type="Proteomes" id="UP000000807">
    <property type="component" value="Chromosome"/>
</dbReference>
<dbReference type="GO" id="GO:0005737">
    <property type="term" value="C:cytoplasm"/>
    <property type="evidence" value="ECO:0007669"/>
    <property type="project" value="UniProtKB-SubCell"/>
</dbReference>
<dbReference type="GO" id="GO:0005524">
    <property type="term" value="F:ATP binding"/>
    <property type="evidence" value="ECO:0007669"/>
    <property type="project" value="InterPro"/>
</dbReference>
<dbReference type="GO" id="GO:0046872">
    <property type="term" value="F:metal ion binding"/>
    <property type="evidence" value="ECO:0000318"/>
    <property type="project" value="GO_Central"/>
</dbReference>
<dbReference type="GO" id="GO:0044183">
    <property type="term" value="F:protein folding chaperone"/>
    <property type="evidence" value="ECO:0007669"/>
    <property type="project" value="InterPro"/>
</dbReference>
<dbReference type="GO" id="GO:0051087">
    <property type="term" value="F:protein-folding chaperone binding"/>
    <property type="evidence" value="ECO:0000318"/>
    <property type="project" value="GO_Central"/>
</dbReference>
<dbReference type="GO" id="GO:0051082">
    <property type="term" value="F:unfolded protein binding"/>
    <property type="evidence" value="ECO:0000318"/>
    <property type="project" value="GO_Central"/>
</dbReference>
<dbReference type="GO" id="GO:0051085">
    <property type="term" value="P:chaperone cofactor-dependent protein refolding"/>
    <property type="evidence" value="ECO:0000318"/>
    <property type="project" value="GO_Central"/>
</dbReference>
<dbReference type="CDD" id="cd00320">
    <property type="entry name" value="cpn10"/>
    <property type="match status" value="1"/>
</dbReference>
<dbReference type="Gene3D" id="2.30.33.40">
    <property type="entry name" value="GroES chaperonin"/>
    <property type="match status" value="1"/>
</dbReference>
<dbReference type="HAMAP" id="MF_00580">
    <property type="entry name" value="CH10"/>
    <property type="match status" value="1"/>
</dbReference>
<dbReference type="InterPro" id="IPR020818">
    <property type="entry name" value="Chaperonin_GroES"/>
</dbReference>
<dbReference type="InterPro" id="IPR037124">
    <property type="entry name" value="Chaperonin_GroES_sf"/>
</dbReference>
<dbReference type="InterPro" id="IPR011032">
    <property type="entry name" value="GroES-like_sf"/>
</dbReference>
<dbReference type="NCBIfam" id="NF001536">
    <property type="entry name" value="PRK00364.3-2"/>
    <property type="match status" value="1"/>
</dbReference>
<dbReference type="Pfam" id="PF00166">
    <property type="entry name" value="Cpn10"/>
    <property type="match status" value="1"/>
</dbReference>
<dbReference type="PRINTS" id="PR00297">
    <property type="entry name" value="CHAPERONIN10"/>
</dbReference>
<dbReference type="SMART" id="SM00883">
    <property type="entry name" value="Cpn10"/>
    <property type="match status" value="1"/>
</dbReference>
<dbReference type="SUPFAM" id="SSF50129">
    <property type="entry name" value="GroES-like"/>
    <property type="match status" value="1"/>
</dbReference>
<gene>
    <name evidence="1" type="primary">groES</name>
    <name evidence="1" type="synonym">groS</name>
    <name type="synonym">mopB</name>
    <name type="ordered locus">MG393</name>
</gene>
<comment type="function">
    <text evidence="1">Together with the chaperonin GroEL, plays an essential role in assisting protein folding. The GroEL-GroES system forms a nano-cage that allows encapsulation of the non-native substrate proteins and provides a physical environment optimized to promote and accelerate protein folding. GroES binds to the apical surface of the GroEL ring, thereby capping the opening of the GroEL channel.</text>
</comment>
<comment type="subunit">
    <text evidence="1">Heptamer of 7 subunits arranged in a ring. Interacts with the chaperonin GroEL.</text>
</comment>
<comment type="subcellular location">
    <subcellularLocation>
        <location evidence="1">Cytoplasm</location>
    </subcellularLocation>
</comment>
<comment type="similarity">
    <text evidence="1 2">Belongs to the GroES chaperonin family.</text>
</comment>